<keyword id="KW-0085">Behavior</keyword>
<keyword id="KW-0963">Cytoplasm</keyword>
<keyword id="KW-0378">Hydrolase</keyword>
<keyword id="KW-0479">Metal-binding</keyword>
<keyword id="KW-0645">Protease</keyword>
<keyword id="KW-1185">Reference proteome</keyword>
<keyword id="KW-0788">Thiol protease</keyword>
<keyword id="KW-0833">Ubl conjugation pathway</keyword>
<keyword id="KW-0862">Zinc</keyword>
<sequence length="366" mass="42442">MTVRNIASICNMGTNASALEKDIGPEQFPINEHYFGLVNFGNTCYCNSVLQALYFCRPFRENVLAYKAQQKKKENLLTCLADLFHSIATQKKKVGVIPPKKFISRLRKENDLFDNYMQQDAHEFLNYLLNTIADILQEEKKQEKQNGKLKNGNMNEPAENNKPELTWVHEIFQGTLTNETRCLNCETVSSKDEDFLDLSVDVEQNTSITHCLRDFSNTETLCSEQKYYCETCCSKQEAQKRMRVKKLPMILALHLKRFKYMEQLHRYTKLSYRVVFPLELRLFNTSSDAVNLDRMYDLVAVVVHCGSGPNRGHYITIVKSHGFWLLFDDDIVEKIDAQAIEEFYGLTSDISKNSESGYILFYQSRE</sequence>
<name>UBP46_MOUSE</name>
<proteinExistence type="evidence at protein level"/>
<accession>P62069</accession>
<accession>Q3ULU5</accession>
<accession>Q80V95</accession>
<accession>Q9H7U4</accession>
<accession>Q9H9T8</accession>
<dbReference type="EC" id="3.4.19.12" evidence="1"/>
<dbReference type="EMBL" id="AK145298">
    <property type="protein sequence ID" value="BAE26353.1"/>
    <property type="molecule type" value="mRNA"/>
</dbReference>
<dbReference type="EMBL" id="BC039916">
    <property type="protein sequence ID" value="AAH39916.1"/>
    <property type="molecule type" value="mRNA"/>
</dbReference>
<dbReference type="CCDS" id="CCDS39112.1"/>
<dbReference type="RefSeq" id="NP_808229.1">
    <property type="nucleotide sequence ID" value="NM_177561.4"/>
</dbReference>
<dbReference type="SMR" id="P62069"/>
<dbReference type="BioGRID" id="213641">
    <property type="interactions" value="9"/>
</dbReference>
<dbReference type="FunCoup" id="P62069">
    <property type="interactions" value="2431"/>
</dbReference>
<dbReference type="STRING" id="10090.ENSMUSP00000070554"/>
<dbReference type="MEROPS" id="C19.052"/>
<dbReference type="GlyGen" id="P62069">
    <property type="glycosylation" value="1 site, 1 N-linked glycan (1 site)"/>
</dbReference>
<dbReference type="iPTMnet" id="P62069"/>
<dbReference type="PhosphoSitePlus" id="P62069"/>
<dbReference type="SwissPalm" id="P62069"/>
<dbReference type="PaxDb" id="10090-ENSMUSP00000070554"/>
<dbReference type="ProteomicsDB" id="298106"/>
<dbReference type="Pumba" id="P62069"/>
<dbReference type="Antibodypedia" id="1722">
    <property type="antibodies" value="132 antibodies from 26 providers"/>
</dbReference>
<dbReference type="DNASU" id="69727"/>
<dbReference type="Ensembl" id="ENSMUST00000068058.14">
    <property type="protein sequence ID" value="ENSMUSP00000070554.8"/>
    <property type="gene ID" value="ENSMUSG00000054814.15"/>
</dbReference>
<dbReference type="GeneID" id="69727"/>
<dbReference type="KEGG" id="mmu:69727"/>
<dbReference type="UCSC" id="uc008xtg.1">
    <property type="organism name" value="mouse"/>
</dbReference>
<dbReference type="AGR" id="MGI:1916977"/>
<dbReference type="CTD" id="64854"/>
<dbReference type="MGI" id="MGI:1916977">
    <property type="gene designation" value="Usp46"/>
</dbReference>
<dbReference type="VEuPathDB" id="HostDB:ENSMUSG00000054814"/>
<dbReference type="eggNOG" id="KOG1864">
    <property type="taxonomic scope" value="Eukaryota"/>
</dbReference>
<dbReference type="GeneTree" id="ENSGT00940000153284"/>
<dbReference type="InParanoid" id="P62069"/>
<dbReference type="OMA" id="ANFGNTC"/>
<dbReference type="OrthoDB" id="27652at2759"/>
<dbReference type="PhylomeDB" id="P62069"/>
<dbReference type="TreeFam" id="TF314144"/>
<dbReference type="BioGRID-ORCS" id="69727">
    <property type="hits" value="1 hit in 78 CRISPR screens"/>
</dbReference>
<dbReference type="PRO" id="PR:P62069"/>
<dbReference type="Proteomes" id="UP000000589">
    <property type="component" value="Chromosome 5"/>
</dbReference>
<dbReference type="RNAct" id="P62069">
    <property type="molecule type" value="protein"/>
</dbReference>
<dbReference type="Bgee" id="ENSMUSG00000054814">
    <property type="expression patterns" value="Expressed in secondary oocyte and 228 other cell types or tissues"/>
</dbReference>
<dbReference type="ExpressionAtlas" id="P62069">
    <property type="expression patterns" value="baseline and differential"/>
</dbReference>
<dbReference type="GO" id="GO:0005737">
    <property type="term" value="C:cytoplasm"/>
    <property type="evidence" value="ECO:0000250"/>
    <property type="project" value="UniProtKB"/>
</dbReference>
<dbReference type="GO" id="GO:0005829">
    <property type="term" value="C:cytosol"/>
    <property type="evidence" value="ECO:0000266"/>
    <property type="project" value="MGI"/>
</dbReference>
<dbReference type="GO" id="GO:0098978">
    <property type="term" value="C:glutamatergic synapse"/>
    <property type="evidence" value="ECO:0007669"/>
    <property type="project" value="Ensembl"/>
</dbReference>
<dbReference type="GO" id="GO:0005634">
    <property type="term" value="C:nucleus"/>
    <property type="evidence" value="ECO:0000266"/>
    <property type="project" value="MGI"/>
</dbReference>
<dbReference type="GO" id="GO:0004843">
    <property type="term" value="F:cysteine-type deubiquitinase activity"/>
    <property type="evidence" value="ECO:0000250"/>
    <property type="project" value="UniProtKB"/>
</dbReference>
<dbReference type="GO" id="GO:0101005">
    <property type="term" value="F:deubiquitinase activity"/>
    <property type="evidence" value="ECO:0000314"/>
    <property type="project" value="MGI"/>
</dbReference>
<dbReference type="GO" id="GO:0046872">
    <property type="term" value="F:metal ion binding"/>
    <property type="evidence" value="ECO:0007669"/>
    <property type="project" value="UniProtKB-KW"/>
</dbReference>
<dbReference type="GO" id="GO:0008343">
    <property type="term" value="P:adult feeding behavior"/>
    <property type="evidence" value="ECO:0000315"/>
    <property type="project" value="MGI"/>
</dbReference>
<dbReference type="GO" id="GO:0001662">
    <property type="term" value="P:behavioral fear response"/>
    <property type="evidence" value="ECO:0000315"/>
    <property type="project" value="MGI"/>
</dbReference>
<dbReference type="GO" id="GO:0048149">
    <property type="term" value="P:behavioral response to ethanol"/>
    <property type="evidence" value="ECO:0000315"/>
    <property type="project" value="MGI"/>
</dbReference>
<dbReference type="GO" id="GO:0050862">
    <property type="term" value="P:positive regulation of T cell receptor signaling pathway"/>
    <property type="evidence" value="ECO:0000266"/>
    <property type="project" value="MGI"/>
</dbReference>
<dbReference type="GO" id="GO:0016579">
    <property type="term" value="P:protein deubiquitination"/>
    <property type="evidence" value="ECO:0000314"/>
    <property type="project" value="MGI"/>
</dbReference>
<dbReference type="GO" id="GO:0006508">
    <property type="term" value="P:proteolysis"/>
    <property type="evidence" value="ECO:0007669"/>
    <property type="project" value="UniProtKB-KW"/>
</dbReference>
<dbReference type="GO" id="GO:0099149">
    <property type="term" value="P:regulation of postsynaptic neurotransmitter receptor internalization"/>
    <property type="evidence" value="ECO:0007669"/>
    <property type="project" value="Ensembl"/>
</dbReference>
<dbReference type="GO" id="GO:0032228">
    <property type="term" value="P:regulation of synaptic transmission, GABAergic"/>
    <property type="evidence" value="ECO:0000315"/>
    <property type="project" value="UniProtKB"/>
</dbReference>
<dbReference type="GO" id="GO:0060013">
    <property type="term" value="P:righting reflex"/>
    <property type="evidence" value="ECO:0000315"/>
    <property type="project" value="MGI"/>
</dbReference>
<dbReference type="CDD" id="cd02663">
    <property type="entry name" value="Peptidase_C19G"/>
    <property type="match status" value="1"/>
</dbReference>
<dbReference type="FunFam" id="3.90.70.10:FF:000003">
    <property type="entry name" value="Ubiquitin carboxyl-terminal hydrolase 46"/>
    <property type="match status" value="1"/>
</dbReference>
<dbReference type="Gene3D" id="3.90.70.10">
    <property type="entry name" value="Cysteine proteinases"/>
    <property type="match status" value="1"/>
</dbReference>
<dbReference type="InterPro" id="IPR038765">
    <property type="entry name" value="Papain-like_cys_pep_sf"/>
</dbReference>
<dbReference type="InterPro" id="IPR050164">
    <property type="entry name" value="Peptidase_C19"/>
</dbReference>
<dbReference type="InterPro" id="IPR001394">
    <property type="entry name" value="Peptidase_C19_UCH"/>
</dbReference>
<dbReference type="InterPro" id="IPR018200">
    <property type="entry name" value="USP_CS"/>
</dbReference>
<dbReference type="InterPro" id="IPR028889">
    <property type="entry name" value="USP_dom"/>
</dbReference>
<dbReference type="PANTHER" id="PTHR24006">
    <property type="entry name" value="UBIQUITIN CARBOXYL-TERMINAL HYDROLASE"/>
    <property type="match status" value="1"/>
</dbReference>
<dbReference type="PANTHER" id="PTHR24006:SF714">
    <property type="entry name" value="UBIQUITIN CARBOXYL-TERMINAL HYDROLASE 46"/>
    <property type="match status" value="1"/>
</dbReference>
<dbReference type="Pfam" id="PF00443">
    <property type="entry name" value="UCH"/>
    <property type="match status" value="1"/>
</dbReference>
<dbReference type="SUPFAM" id="SSF54001">
    <property type="entry name" value="Cysteine proteinases"/>
    <property type="match status" value="1"/>
</dbReference>
<dbReference type="PROSITE" id="PS00972">
    <property type="entry name" value="USP_1"/>
    <property type="match status" value="1"/>
</dbReference>
<dbReference type="PROSITE" id="PS00973">
    <property type="entry name" value="USP_2"/>
    <property type="match status" value="1"/>
</dbReference>
<dbReference type="PROSITE" id="PS50235">
    <property type="entry name" value="USP_3"/>
    <property type="match status" value="1"/>
</dbReference>
<reference key="1">
    <citation type="journal article" date="2005" name="Science">
        <title>The transcriptional landscape of the mammalian genome.</title>
        <authorList>
            <person name="Carninci P."/>
            <person name="Kasukawa T."/>
            <person name="Katayama S."/>
            <person name="Gough J."/>
            <person name="Frith M.C."/>
            <person name="Maeda N."/>
            <person name="Oyama R."/>
            <person name="Ravasi T."/>
            <person name="Lenhard B."/>
            <person name="Wells C."/>
            <person name="Kodzius R."/>
            <person name="Shimokawa K."/>
            <person name="Bajic V.B."/>
            <person name="Brenner S.E."/>
            <person name="Batalov S."/>
            <person name="Forrest A.R."/>
            <person name="Zavolan M."/>
            <person name="Davis M.J."/>
            <person name="Wilming L.G."/>
            <person name="Aidinis V."/>
            <person name="Allen J.E."/>
            <person name="Ambesi-Impiombato A."/>
            <person name="Apweiler R."/>
            <person name="Aturaliya R.N."/>
            <person name="Bailey T.L."/>
            <person name="Bansal M."/>
            <person name="Baxter L."/>
            <person name="Beisel K.W."/>
            <person name="Bersano T."/>
            <person name="Bono H."/>
            <person name="Chalk A.M."/>
            <person name="Chiu K.P."/>
            <person name="Choudhary V."/>
            <person name="Christoffels A."/>
            <person name="Clutterbuck D.R."/>
            <person name="Crowe M.L."/>
            <person name="Dalla E."/>
            <person name="Dalrymple B.P."/>
            <person name="de Bono B."/>
            <person name="Della Gatta G."/>
            <person name="di Bernardo D."/>
            <person name="Down T."/>
            <person name="Engstrom P."/>
            <person name="Fagiolini M."/>
            <person name="Faulkner G."/>
            <person name="Fletcher C.F."/>
            <person name="Fukushima T."/>
            <person name="Furuno M."/>
            <person name="Futaki S."/>
            <person name="Gariboldi M."/>
            <person name="Georgii-Hemming P."/>
            <person name="Gingeras T.R."/>
            <person name="Gojobori T."/>
            <person name="Green R.E."/>
            <person name="Gustincich S."/>
            <person name="Harbers M."/>
            <person name="Hayashi Y."/>
            <person name="Hensch T.K."/>
            <person name="Hirokawa N."/>
            <person name="Hill D."/>
            <person name="Huminiecki L."/>
            <person name="Iacono M."/>
            <person name="Ikeo K."/>
            <person name="Iwama A."/>
            <person name="Ishikawa T."/>
            <person name="Jakt M."/>
            <person name="Kanapin A."/>
            <person name="Katoh M."/>
            <person name="Kawasawa Y."/>
            <person name="Kelso J."/>
            <person name="Kitamura H."/>
            <person name="Kitano H."/>
            <person name="Kollias G."/>
            <person name="Krishnan S.P."/>
            <person name="Kruger A."/>
            <person name="Kummerfeld S.K."/>
            <person name="Kurochkin I.V."/>
            <person name="Lareau L.F."/>
            <person name="Lazarevic D."/>
            <person name="Lipovich L."/>
            <person name="Liu J."/>
            <person name="Liuni S."/>
            <person name="McWilliam S."/>
            <person name="Madan Babu M."/>
            <person name="Madera M."/>
            <person name="Marchionni L."/>
            <person name="Matsuda H."/>
            <person name="Matsuzawa S."/>
            <person name="Miki H."/>
            <person name="Mignone F."/>
            <person name="Miyake S."/>
            <person name="Morris K."/>
            <person name="Mottagui-Tabar S."/>
            <person name="Mulder N."/>
            <person name="Nakano N."/>
            <person name="Nakauchi H."/>
            <person name="Ng P."/>
            <person name="Nilsson R."/>
            <person name="Nishiguchi S."/>
            <person name="Nishikawa S."/>
            <person name="Nori F."/>
            <person name="Ohara O."/>
            <person name="Okazaki Y."/>
            <person name="Orlando V."/>
            <person name="Pang K.C."/>
            <person name="Pavan W.J."/>
            <person name="Pavesi G."/>
            <person name="Pesole G."/>
            <person name="Petrovsky N."/>
            <person name="Piazza S."/>
            <person name="Reed J."/>
            <person name="Reid J.F."/>
            <person name="Ring B.Z."/>
            <person name="Ringwald M."/>
            <person name="Rost B."/>
            <person name="Ruan Y."/>
            <person name="Salzberg S.L."/>
            <person name="Sandelin A."/>
            <person name="Schneider C."/>
            <person name="Schoenbach C."/>
            <person name="Sekiguchi K."/>
            <person name="Semple C.A."/>
            <person name="Seno S."/>
            <person name="Sessa L."/>
            <person name="Sheng Y."/>
            <person name="Shibata Y."/>
            <person name="Shimada H."/>
            <person name="Shimada K."/>
            <person name="Silva D."/>
            <person name="Sinclair B."/>
            <person name="Sperling S."/>
            <person name="Stupka E."/>
            <person name="Sugiura K."/>
            <person name="Sultana R."/>
            <person name="Takenaka Y."/>
            <person name="Taki K."/>
            <person name="Tammoja K."/>
            <person name="Tan S.L."/>
            <person name="Tang S."/>
            <person name="Taylor M.S."/>
            <person name="Tegner J."/>
            <person name="Teichmann S.A."/>
            <person name="Ueda H.R."/>
            <person name="van Nimwegen E."/>
            <person name="Verardo R."/>
            <person name="Wei C.L."/>
            <person name="Yagi K."/>
            <person name="Yamanishi H."/>
            <person name="Zabarovsky E."/>
            <person name="Zhu S."/>
            <person name="Zimmer A."/>
            <person name="Hide W."/>
            <person name="Bult C."/>
            <person name="Grimmond S.M."/>
            <person name="Teasdale R.D."/>
            <person name="Liu E.T."/>
            <person name="Brusic V."/>
            <person name="Quackenbush J."/>
            <person name="Wahlestedt C."/>
            <person name="Mattick J.S."/>
            <person name="Hume D.A."/>
            <person name="Kai C."/>
            <person name="Sasaki D."/>
            <person name="Tomaru Y."/>
            <person name="Fukuda S."/>
            <person name="Kanamori-Katayama M."/>
            <person name="Suzuki M."/>
            <person name="Aoki J."/>
            <person name="Arakawa T."/>
            <person name="Iida J."/>
            <person name="Imamura K."/>
            <person name="Itoh M."/>
            <person name="Kato T."/>
            <person name="Kawaji H."/>
            <person name="Kawagashira N."/>
            <person name="Kawashima T."/>
            <person name="Kojima M."/>
            <person name="Kondo S."/>
            <person name="Konno H."/>
            <person name="Nakano K."/>
            <person name="Ninomiya N."/>
            <person name="Nishio T."/>
            <person name="Okada M."/>
            <person name="Plessy C."/>
            <person name="Shibata K."/>
            <person name="Shiraki T."/>
            <person name="Suzuki S."/>
            <person name="Tagami M."/>
            <person name="Waki K."/>
            <person name="Watahiki A."/>
            <person name="Okamura-Oho Y."/>
            <person name="Suzuki H."/>
            <person name="Kawai J."/>
            <person name="Hayashizaki Y."/>
        </authorList>
    </citation>
    <scope>NUCLEOTIDE SEQUENCE [LARGE SCALE MRNA]</scope>
    <source>
        <tissue>Mammary gland</tissue>
    </source>
</reference>
<reference key="2">
    <citation type="journal article" date="2004" name="Genome Res.">
        <title>The status, quality, and expansion of the NIH full-length cDNA project: the Mammalian Gene Collection (MGC).</title>
        <authorList>
            <consortium name="The MGC Project Team"/>
        </authorList>
    </citation>
    <scope>NUCLEOTIDE SEQUENCE [LARGE SCALE MRNA]</scope>
    <source>
        <strain>FVB/N</strain>
        <tissue>Mammary tumor</tissue>
    </source>
</reference>
<reference key="3">
    <citation type="journal article" date="2009" name="Nat. Genet.">
        <title>Usp46 is a quantitative trait gene regulating mouse immobile behavior in the tail suspension and forced swimming tests.</title>
        <authorList>
            <person name="Tomida S."/>
            <person name="Mamiya T."/>
            <person name="Sakamaki H."/>
            <person name="Miura M."/>
            <person name="Aosaki T."/>
            <person name="Masuda M."/>
            <person name="Niwa M."/>
            <person name="Kameyama T."/>
            <person name="Kobayashi J."/>
            <person name="Iwaki Y."/>
            <person name="Imai S."/>
            <person name="Ishikawa A."/>
            <person name="Abe K."/>
            <person name="Yoshimura T."/>
            <person name="Nabeshima T."/>
            <person name="Ebihara S."/>
        </authorList>
    </citation>
    <scope>FUNCTION</scope>
    <scope>MUTAGENESIS OF LYS-92</scope>
</reference>
<protein>
    <recommendedName>
        <fullName>Ubiquitin carboxyl-terminal hydrolase 46</fullName>
        <ecNumber evidence="1">3.4.19.12</ecNumber>
    </recommendedName>
    <alternativeName>
        <fullName>Deubiquitinating enzyme 46</fullName>
    </alternativeName>
    <alternativeName>
        <fullName>Ubiquitin thioesterase 46</fullName>
    </alternativeName>
    <alternativeName>
        <fullName>Ubiquitin-specific-processing protease 46</fullName>
    </alternativeName>
</protein>
<organism>
    <name type="scientific">Mus musculus</name>
    <name type="common">Mouse</name>
    <dbReference type="NCBI Taxonomy" id="10090"/>
    <lineage>
        <taxon>Eukaryota</taxon>
        <taxon>Metazoa</taxon>
        <taxon>Chordata</taxon>
        <taxon>Craniata</taxon>
        <taxon>Vertebrata</taxon>
        <taxon>Euteleostomi</taxon>
        <taxon>Mammalia</taxon>
        <taxon>Eutheria</taxon>
        <taxon>Euarchontoglires</taxon>
        <taxon>Glires</taxon>
        <taxon>Rodentia</taxon>
        <taxon>Myomorpha</taxon>
        <taxon>Muroidea</taxon>
        <taxon>Muridae</taxon>
        <taxon>Murinae</taxon>
        <taxon>Mus</taxon>
        <taxon>Mus</taxon>
    </lineage>
</organism>
<comment type="function">
    <text evidence="1 4">Deubiquitinating enzyme that plays a role in behavior, possibly by regulating GABA action. May act by mediating the deubiquitination of GAD1/GAD67 (PubMed:19465912). Has almost no deubiquitinating activity by itself and requires the interaction with WDR48 to have a high activity. Not involved in deubiquitination of monoubiquitinated FANCD2 (By similarity).</text>
</comment>
<comment type="catalytic activity">
    <reaction evidence="1">
        <text>Thiol-dependent hydrolysis of ester, thioester, amide, peptide and isopeptide bonds formed by the C-terminal Gly of ubiquitin (a 76-residue protein attached to proteins as an intracellular targeting signal).</text>
        <dbReference type="EC" id="3.4.19.12"/>
    </reaction>
</comment>
<comment type="subunit">
    <text evidence="1">Interacts with WDR48. Interacts with WDR20. Interacts with DMWD. Component of the USP46/WDR20/WDR48 deubiquitinating complex.</text>
</comment>
<comment type="subcellular location">
    <subcellularLocation>
        <location evidence="1">Cytoplasm</location>
    </subcellularLocation>
    <text evidence="1">USP46/WDR48/WDR20 complex is predominantly cytoplasmic.</text>
</comment>
<comment type="similarity">
    <text evidence="5">Belongs to the peptidase C19 family. USP12/USP46 subfamily.</text>
</comment>
<evidence type="ECO:0000250" key="1">
    <source>
        <dbReference type="UniProtKB" id="P62068"/>
    </source>
</evidence>
<evidence type="ECO:0000255" key="2">
    <source>
        <dbReference type="PROSITE-ProRule" id="PRU10092"/>
    </source>
</evidence>
<evidence type="ECO:0000255" key="3">
    <source>
        <dbReference type="PROSITE-ProRule" id="PRU10093"/>
    </source>
</evidence>
<evidence type="ECO:0000269" key="4">
    <source>
    </source>
</evidence>
<evidence type="ECO:0000305" key="5"/>
<feature type="chain" id="PRO_0000080675" description="Ubiquitin carboxyl-terminal hydrolase 46">
    <location>
        <begin position="1"/>
        <end position="366"/>
    </location>
</feature>
<feature type="domain" description="USP">
    <location>
        <begin position="35"/>
        <end position="365"/>
    </location>
</feature>
<feature type="active site" description="Nucleophile" evidence="2 3">
    <location>
        <position position="44"/>
    </location>
</feature>
<feature type="active site" description="Proton acceptor" evidence="2 3">
    <location>
        <position position="313"/>
    </location>
</feature>
<feature type="binding site" evidence="1">
    <location>
        <position position="182"/>
    </location>
    <ligand>
        <name>Zn(2+)</name>
        <dbReference type="ChEBI" id="CHEBI:29105"/>
    </ligand>
</feature>
<feature type="binding site" evidence="1">
    <location>
        <position position="185"/>
    </location>
    <ligand>
        <name>Zn(2+)</name>
        <dbReference type="ChEBI" id="CHEBI:29105"/>
    </ligand>
</feature>
<feature type="binding site" evidence="1">
    <location>
        <position position="229"/>
    </location>
    <ligand>
        <name>Zn(2+)</name>
        <dbReference type="ChEBI" id="CHEBI:29105"/>
    </ligand>
</feature>
<feature type="binding site" evidence="1">
    <location>
        <position position="232"/>
    </location>
    <ligand>
        <name>Zn(2+)</name>
        <dbReference type="ChEBI" id="CHEBI:29105"/>
    </ligand>
</feature>
<feature type="mutagenesis site" description="In CS; shows negligible immobility in the tail suspension test (TST) and forced swimming test (FST). Both male and female CS mice show virtually no immobile posture immobility in the TST and FST." evidence="4">
    <location>
        <position position="92"/>
    </location>
</feature>
<gene>
    <name type="primary">Usp46</name>
</gene>